<accession>Q4UTQ7</accession>
<gene>
    <name evidence="1" type="primary">miaA</name>
    <name type="ordered locus">XC_2516</name>
</gene>
<keyword id="KW-0067">ATP-binding</keyword>
<keyword id="KW-0460">Magnesium</keyword>
<keyword id="KW-0547">Nucleotide-binding</keyword>
<keyword id="KW-0808">Transferase</keyword>
<keyword id="KW-0819">tRNA processing</keyword>
<evidence type="ECO:0000255" key="1">
    <source>
        <dbReference type="HAMAP-Rule" id="MF_00185"/>
    </source>
</evidence>
<feature type="chain" id="PRO_1000020685" description="tRNA dimethylallyltransferase">
    <location>
        <begin position="1"/>
        <end position="327"/>
    </location>
</feature>
<feature type="region of interest" description="Interaction with substrate tRNA" evidence="1">
    <location>
        <begin position="39"/>
        <end position="42"/>
    </location>
</feature>
<feature type="region of interest" description="Interaction with substrate tRNA" evidence="1">
    <location>
        <begin position="163"/>
        <end position="167"/>
    </location>
</feature>
<feature type="binding site" evidence="1">
    <location>
        <begin position="14"/>
        <end position="21"/>
    </location>
    <ligand>
        <name>ATP</name>
        <dbReference type="ChEBI" id="CHEBI:30616"/>
    </ligand>
</feature>
<feature type="binding site" evidence="1">
    <location>
        <begin position="16"/>
        <end position="21"/>
    </location>
    <ligand>
        <name>substrate</name>
    </ligand>
</feature>
<feature type="site" description="Interaction with substrate tRNA" evidence="1">
    <location>
        <position position="105"/>
    </location>
</feature>
<feature type="site" description="Interaction with substrate tRNA" evidence="1">
    <location>
        <position position="127"/>
    </location>
</feature>
<organism>
    <name type="scientific">Xanthomonas campestris pv. campestris (strain 8004)</name>
    <dbReference type="NCBI Taxonomy" id="314565"/>
    <lineage>
        <taxon>Bacteria</taxon>
        <taxon>Pseudomonadati</taxon>
        <taxon>Pseudomonadota</taxon>
        <taxon>Gammaproteobacteria</taxon>
        <taxon>Lysobacterales</taxon>
        <taxon>Lysobacteraceae</taxon>
        <taxon>Xanthomonas</taxon>
    </lineage>
</organism>
<sequence length="327" mass="35601">MAADQRPLAIAVMGPTASGKTALAIEAAQRWGGEIVSVDSALVYRGLDIGAAKPDAAMRAAVPHHLLDLRDPWQVYSAAEFAADARTAMAQIVARGKIPILAGGTGLYFRAALEGLAQMPEADPAVRLAIAAEAEQVGWGALHAQLARIDPVAAARIHATDRQRIQRALEVYRISGKPISYWQTRPAGPRAPVRVLKLVLAPRQRAVLHARIAMRLDVMLADGFLTEVEQLRALPQMRAVAAPLDLPAVRAVGYRQAWEYLDGAGSLAEFRDKAVQATRQLAKRQLTWLRGELDARWFDPERDRGQLEQAVAGFLGQRRTMQQPSAV</sequence>
<comment type="function">
    <text evidence="1">Catalyzes the transfer of a dimethylallyl group onto the adenine at position 37 in tRNAs that read codons beginning with uridine, leading to the formation of N6-(dimethylallyl)adenosine (i(6)A).</text>
</comment>
<comment type="catalytic activity">
    <reaction evidence="1">
        <text>adenosine(37) in tRNA + dimethylallyl diphosphate = N(6)-dimethylallyladenosine(37) in tRNA + diphosphate</text>
        <dbReference type="Rhea" id="RHEA:26482"/>
        <dbReference type="Rhea" id="RHEA-COMP:10162"/>
        <dbReference type="Rhea" id="RHEA-COMP:10375"/>
        <dbReference type="ChEBI" id="CHEBI:33019"/>
        <dbReference type="ChEBI" id="CHEBI:57623"/>
        <dbReference type="ChEBI" id="CHEBI:74411"/>
        <dbReference type="ChEBI" id="CHEBI:74415"/>
        <dbReference type="EC" id="2.5.1.75"/>
    </reaction>
</comment>
<comment type="cofactor">
    <cofactor evidence="1">
        <name>Mg(2+)</name>
        <dbReference type="ChEBI" id="CHEBI:18420"/>
    </cofactor>
</comment>
<comment type="subunit">
    <text evidence="1">Monomer.</text>
</comment>
<comment type="similarity">
    <text evidence="1">Belongs to the IPP transferase family.</text>
</comment>
<name>MIAA_XANC8</name>
<reference key="1">
    <citation type="journal article" date="2005" name="Genome Res.">
        <title>Comparative and functional genomic analyses of the pathogenicity of phytopathogen Xanthomonas campestris pv. campestris.</title>
        <authorList>
            <person name="Qian W."/>
            <person name="Jia Y."/>
            <person name="Ren S.-X."/>
            <person name="He Y.-Q."/>
            <person name="Feng J.-X."/>
            <person name="Lu L.-F."/>
            <person name="Sun Q."/>
            <person name="Ying G."/>
            <person name="Tang D.-J."/>
            <person name="Tang H."/>
            <person name="Wu W."/>
            <person name="Hao P."/>
            <person name="Wang L."/>
            <person name="Jiang B.-L."/>
            <person name="Zeng S."/>
            <person name="Gu W.-Y."/>
            <person name="Lu G."/>
            <person name="Rong L."/>
            <person name="Tian Y."/>
            <person name="Yao Z."/>
            <person name="Fu G."/>
            <person name="Chen B."/>
            <person name="Fang R."/>
            <person name="Qiang B."/>
            <person name="Chen Z."/>
            <person name="Zhao G.-P."/>
            <person name="Tang J.-L."/>
            <person name="He C."/>
        </authorList>
    </citation>
    <scope>NUCLEOTIDE SEQUENCE [LARGE SCALE GENOMIC DNA]</scope>
    <source>
        <strain>8004</strain>
    </source>
</reference>
<proteinExistence type="inferred from homology"/>
<protein>
    <recommendedName>
        <fullName evidence="1">tRNA dimethylallyltransferase</fullName>
        <ecNumber evidence="1">2.5.1.75</ecNumber>
    </recommendedName>
    <alternativeName>
        <fullName evidence="1">Dimethylallyl diphosphate:tRNA dimethylallyltransferase</fullName>
        <shortName evidence="1">DMAPP:tRNA dimethylallyltransferase</shortName>
        <shortName evidence="1">DMATase</shortName>
    </alternativeName>
    <alternativeName>
        <fullName evidence="1">Isopentenyl-diphosphate:tRNA isopentenyltransferase</fullName>
        <shortName evidence="1">IPP transferase</shortName>
        <shortName evidence="1">IPPT</shortName>
        <shortName evidence="1">IPTase</shortName>
    </alternativeName>
</protein>
<dbReference type="EC" id="2.5.1.75" evidence="1"/>
<dbReference type="EMBL" id="CP000050">
    <property type="protein sequence ID" value="AAY49566.1"/>
    <property type="molecule type" value="Genomic_DNA"/>
</dbReference>
<dbReference type="RefSeq" id="WP_011036892.1">
    <property type="nucleotide sequence ID" value="NZ_CP155948.1"/>
</dbReference>
<dbReference type="SMR" id="Q4UTQ7"/>
<dbReference type="KEGG" id="xcb:XC_2516"/>
<dbReference type="HOGENOM" id="CLU_032616_0_0_6"/>
<dbReference type="Proteomes" id="UP000000420">
    <property type="component" value="Chromosome"/>
</dbReference>
<dbReference type="GO" id="GO:0005524">
    <property type="term" value="F:ATP binding"/>
    <property type="evidence" value="ECO:0007669"/>
    <property type="project" value="UniProtKB-UniRule"/>
</dbReference>
<dbReference type="GO" id="GO:0052381">
    <property type="term" value="F:tRNA dimethylallyltransferase activity"/>
    <property type="evidence" value="ECO:0007669"/>
    <property type="project" value="UniProtKB-UniRule"/>
</dbReference>
<dbReference type="GO" id="GO:0006400">
    <property type="term" value="P:tRNA modification"/>
    <property type="evidence" value="ECO:0007669"/>
    <property type="project" value="TreeGrafter"/>
</dbReference>
<dbReference type="FunFam" id="1.10.20.140:FF:000001">
    <property type="entry name" value="tRNA dimethylallyltransferase"/>
    <property type="match status" value="1"/>
</dbReference>
<dbReference type="Gene3D" id="1.10.20.140">
    <property type="match status" value="1"/>
</dbReference>
<dbReference type="Gene3D" id="3.40.50.300">
    <property type="entry name" value="P-loop containing nucleotide triphosphate hydrolases"/>
    <property type="match status" value="1"/>
</dbReference>
<dbReference type="HAMAP" id="MF_00185">
    <property type="entry name" value="IPP_trans"/>
    <property type="match status" value="1"/>
</dbReference>
<dbReference type="InterPro" id="IPR039657">
    <property type="entry name" value="Dimethylallyltransferase"/>
</dbReference>
<dbReference type="InterPro" id="IPR018022">
    <property type="entry name" value="IPT"/>
</dbReference>
<dbReference type="InterPro" id="IPR027417">
    <property type="entry name" value="P-loop_NTPase"/>
</dbReference>
<dbReference type="NCBIfam" id="TIGR00174">
    <property type="entry name" value="miaA"/>
    <property type="match status" value="1"/>
</dbReference>
<dbReference type="PANTHER" id="PTHR11088">
    <property type="entry name" value="TRNA DIMETHYLALLYLTRANSFERASE"/>
    <property type="match status" value="1"/>
</dbReference>
<dbReference type="PANTHER" id="PTHR11088:SF60">
    <property type="entry name" value="TRNA DIMETHYLALLYLTRANSFERASE"/>
    <property type="match status" value="1"/>
</dbReference>
<dbReference type="Pfam" id="PF01715">
    <property type="entry name" value="IPPT"/>
    <property type="match status" value="1"/>
</dbReference>
<dbReference type="SUPFAM" id="SSF52540">
    <property type="entry name" value="P-loop containing nucleoside triphosphate hydrolases"/>
    <property type="match status" value="1"/>
</dbReference>